<accession>O84739</accession>
<evidence type="ECO:0000255" key="1">
    <source>
        <dbReference type="PROSITE-ProRule" id="PRU00303"/>
    </source>
</evidence>
<evidence type="ECO:0000305" key="2"/>
<comment type="subcellular location">
    <subcellularLocation>
        <location evidence="2">Cell membrane</location>
        <topology evidence="2">Lipid-anchor</topology>
    </subcellularLocation>
</comment>
<comment type="similarity">
    <text evidence="2">Belongs to the chlamydial CPn_0875/CT_734/TC_0107 family.</text>
</comment>
<reference key="1">
    <citation type="journal article" date="1998" name="Science">
        <title>Genome sequence of an obligate intracellular pathogen of humans: Chlamydia trachomatis.</title>
        <authorList>
            <person name="Stephens R.S."/>
            <person name="Kalman S."/>
            <person name="Lammel C.J."/>
            <person name="Fan J."/>
            <person name="Marathe R."/>
            <person name="Aravind L."/>
            <person name="Mitchell W.P."/>
            <person name="Olinger L."/>
            <person name="Tatusov R.L."/>
            <person name="Zhao Q."/>
            <person name="Koonin E.V."/>
            <person name="Davis R.W."/>
        </authorList>
    </citation>
    <scope>NUCLEOTIDE SEQUENCE [LARGE SCALE GENOMIC DNA]</scope>
    <source>
        <strain>ATCC VR-885 / DSM 19411 / UW-3/Cx</strain>
    </source>
</reference>
<proteinExistence type="inferred from homology"/>
<keyword id="KW-1003">Cell membrane</keyword>
<keyword id="KW-0449">Lipoprotein</keyword>
<keyword id="KW-0472">Membrane</keyword>
<keyword id="KW-0564">Palmitate</keyword>
<keyword id="KW-1185">Reference proteome</keyword>
<keyword id="KW-0732">Signal</keyword>
<protein>
    <recommendedName>
        <fullName>Probable lipoprotein CT_734</fullName>
    </recommendedName>
</protein>
<sequence>MKKFIYKYSFGALLLLSGLSGLSSCCANSYGSTLAKNTAEIKEESVTLREKPDAGCKKKSSCYLRKFFSRKKPKEKTEPVLPNFKSYADPMTDSERKDLSFVVSAAADKSSIALAMAQGEIKGALSRIREIHPLALLQALAEDPALIAGMKKMQGRDWVWNIFITELSKVFSQAASLGAFSVADVAAFASTLGLDSGTVTSIVDGERWAELIDVVIQNPAI</sequence>
<gene>
    <name type="ordered locus">CT_734</name>
</gene>
<organism>
    <name type="scientific">Chlamydia trachomatis serovar D (strain ATCC VR-885 / DSM 19411 / UW-3/Cx)</name>
    <dbReference type="NCBI Taxonomy" id="272561"/>
    <lineage>
        <taxon>Bacteria</taxon>
        <taxon>Pseudomonadati</taxon>
        <taxon>Chlamydiota</taxon>
        <taxon>Chlamydiia</taxon>
        <taxon>Chlamydiales</taxon>
        <taxon>Chlamydiaceae</taxon>
        <taxon>Chlamydia/Chlamydophila group</taxon>
        <taxon>Chlamydia</taxon>
    </lineage>
</organism>
<feature type="signal peptide" evidence="1">
    <location>
        <begin position="1"/>
        <end position="24"/>
    </location>
</feature>
<feature type="chain" id="PRO_0000013759" description="Probable lipoprotein CT_734">
    <location>
        <begin position="25"/>
        <end position="221"/>
    </location>
</feature>
<feature type="lipid moiety-binding region" description="N-palmitoyl cysteine" evidence="1">
    <location>
        <position position="25"/>
    </location>
</feature>
<feature type="lipid moiety-binding region" description="S-diacylglycerol cysteine" evidence="1">
    <location>
        <position position="25"/>
    </location>
</feature>
<dbReference type="EMBL" id="AE001273">
    <property type="protein sequence ID" value="AAC68329.1"/>
    <property type="molecule type" value="Genomic_DNA"/>
</dbReference>
<dbReference type="PIR" id="E71477">
    <property type="entry name" value="E71477"/>
</dbReference>
<dbReference type="RefSeq" id="NP_220253.1">
    <property type="nucleotide sequence ID" value="NC_000117.1"/>
</dbReference>
<dbReference type="RefSeq" id="WP_010725326.1">
    <property type="nucleotide sequence ID" value="NC_000117.1"/>
</dbReference>
<dbReference type="STRING" id="272561.CT_734"/>
<dbReference type="EnsemblBacteria" id="AAC68329">
    <property type="protein sequence ID" value="AAC68329"/>
    <property type="gene ID" value="CT_734"/>
</dbReference>
<dbReference type="GeneID" id="884524"/>
<dbReference type="KEGG" id="ctr:CT_734"/>
<dbReference type="PATRIC" id="fig|272561.5.peg.807"/>
<dbReference type="HOGENOM" id="CLU_1341277_0_0_0"/>
<dbReference type="InParanoid" id="O84739"/>
<dbReference type="OrthoDB" id="19114at2"/>
<dbReference type="Proteomes" id="UP000000431">
    <property type="component" value="Chromosome"/>
</dbReference>
<dbReference type="GO" id="GO:0005886">
    <property type="term" value="C:plasma membrane"/>
    <property type="evidence" value="ECO:0007669"/>
    <property type="project" value="UniProtKB-SubCell"/>
</dbReference>
<dbReference type="PROSITE" id="PS51257">
    <property type="entry name" value="PROKAR_LIPOPROTEIN"/>
    <property type="match status" value="1"/>
</dbReference>
<name>Y734_CHLTR</name>